<dbReference type="EC" id="4.2.1.113" evidence="1"/>
<dbReference type="EMBL" id="CP000822">
    <property type="protein sequence ID" value="ABV11685.1"/>
    <property type="molecule type" value="Genomic_DNA"/>
</dbReference>
<dbReference type="RefSeq" id="WP_012131510.1">
    <property type="nucleotide sequence ID" value="NC_009792.1"/>
</dbReference>
<dbReference type="SMR" id="A8ADX2"/>
<dbReference type="STRING" id="290338.CKO_00529"/>
<dbReference type="GeneID" id="45134771"/>
<dbReference type="KEGG" id="cko:CKO_00529"/>
<dbReference type="HOGENOM" id="CLU_030273_0_1_6"/>
<dbReference type="OrthoDB" id="3725747at2"/>
<dbReference type="UniPathway" id="UPA00079"/>
<dbReference type="UniPathway" id="UPA01057">
    <property type="reaction ID" value="UER00165"/>
</dbReference>
<dbReference type="Proteomes" id="UP000008148">
    <property type="component" value="Chromosome"/>
</dbReference>
<dbReference type="GO" id="GO:0000287">
    <property type="term" value="F:magnesium ion binding"/>
    <property type="evidence" value="ECO:0007669"/>
    <property type="project" value="UniProtKB-UniRule"/>
</dbReference>
<dbReference type="GO" id="GO:0043748">
    <property type="term" value="F:O-succinylbenzoate synthase activity"/>
    <property type="evidence" value="ECO:0007669"/>
    <property type="project" value="UniProtKB-EC"/>
</dbReference>
<dbReference type="GO" id="GO:0009234">
    <property type="term" value="P:menaquinone biosynthetic process"/>
    <property type="evidence" value="ECO:0007669"/>
    <property type="project" value="UniProtKB-UniRule"/>
</dbReference>
<dbReference type="CDD" id="cd03320">
    <property type="entry name" value="OSBS"/>
    <property type="match status" value="1"/>
</dbReference>
<dbReference type="FunFam" id="3.20.20.120:FF:000006">
    <property type="entry name" value="o-succinylbenzoate synthase"/>
    <property type="match status" value="1"/>
</dbReference>
<dbReference type="Gene3D" id="3.20.20.120">
    <property type="entry name" value="Enolase-like C-terminal domain"/>
    <property type="match status" value="1"/>
</dbReference>
<dbReference type="Gene3D" id="3.30.390.10">
    <property type="entry name" value="Enolase-like, N-terminal domain"/>
    <property type="match status" value="1"/>
</dbReference>
<dbReference type="HAMAP" id="MF_00470">
    <property type="entry name" value="MenC_1"/>
    <property type="match status" value="1"/>
</dbReference>
<dbReference type="InterPro" id="IPR036849">
    <property type="entry name" value="Enolase-like_C_sf"/>
</dbReference>
<dbReference type="InterPro" id="IPR029017">
    <property type="entry name" value="Enolase-like_N"/>
</dbReference>
<dbReference type="InterPro" id="IPR029065">
    <property type="entry name" value="Enolase_C-like"/>
</dbReference>
<dbReference type="InterPro" id="IPR013342">
    <property type="entry name" value="Mandelate_racemase_C"/>
</dbReference>
<dbReference type="InterPro" id="IPR010196">
    <property type="entry name" value="OSB_synthase_MenC1"/>
</dbReference>
<dbReference type="InterPro" id="IPR041338">
    <property type="entry name" value="OSBS_N"/>
</dbReference>
<dbReference type="NCBIfam" id="TIGR01927">
    <property type="entry name" value="menC_gam_Gplu"/>
    <property type="match status" value="1"/>
</dbReference>
<dbReference type="NCBIfam" id="NF003473">
    <property type="entry name" value="PRK05105.1"/>
    <property type="match status" value="1"/>
</dbReference>
<dbReference type="PANTHER" id="PTHR48073:SF2">
    <property type="entry name" value="O-SUCCINYLBENZOATE SYNTHASE"/>
    <property type="match status" value="1"/>
</dbReference>
<dbReference type="PANTHER" id="PTHR48073">
    <property type="entry name" value="O-SUCCINYLBENZOATE SYNTHASE-RELATED"/>
    <property type="match status" value="1"/>
</dbReference>
<dbReference type="Pfam" id="PF21508">
    <property type="entry name" value="MenC_N"/>
    <property type="match status" value="1"/>
</dbReference>
<dbReference type="Pfam" id="PF13378">
    <property type="entry name" value="MR_MLE_C"/>
    <property type="match status" value="1"/>
</dbReference>
<dbReference type="SFLD" id="SFLDS00001">
    <property type="entry name" value="Enolase"/>
    <property type="match status" value="1"/>
</dbReference>
<dbReference type="SFLD" id="SFLDF00009">
    <property type="entry name" value="o-succinylbenzoate_synthase"/>
    <property type="match status" value="1"/>
</dbReference>
<dbReference type="SMART" id="SM00922">
    <property type="entry name" value="MR_MLE"/>
    <property type="match status" value="1"/>
</dbReference>
<dbReference type="SUPFAM" id="SSF51604">
    <property type="entry name" value="Enolase C-terminal domain-like"/>
    <property type="match status" value="1"/>
</dbReference>
<dbReference type="SUPFAM" id="SSF54826">
    <property type="entry name" value="Enolase N-terminal domain-like"/>
    <property type="match status" value="1"/>
</dbReference>
<reference key="1">
    <citation type="submission" date="2007-08" db="EMBL/GenBank/DDBJ databases">
        <authorList>
            <consortium name="The Citrobacter koseri Genome Sequencing Project"/>
            <person name="McClelland M."/>
            <person name="Sanderson E.K."/>
            <person name="Porwollik S."/>
            <person name="Spieth J."/>
            <person name="Clifton W.S."/>
            <person name="Latreille P."/>
            <person name="Courtney L."/>
            <person name="Wang C."/>
            <person name="Pepin K."/>
            <person name="Bhonagiri V."/>
            <person name="Nash W."/>
            <person name="Johnson M."/>
            <person name="Thiruvilangam P."/>
            <person name="Wilson R."/>
        </authorList>
    </citation>
    <scope>NUCLEOTIDE SEQUENCE [LARGE SCALE GENOMIC DNA]</scope>
    <source>
        <strain>ATCC BAA-895 / CDC 4225-83 / SGSC4696</strain>
    </source>
</reference>
<sequence length="320" mass="35026">MRSAQVYRWQIPMDAGVVLRDRRLKTRDGLYVRLCDGEREGWGEISPLPGFSQETLEEAQAALLDWVNGWLQGQSTLPEVPSVAFGVSCALAEAAGTLPEAADYRAAPLCTGDPDDLVLQLADMPGEKVAKIKVGLYEAVRDGMVVNLLLEAVPDLHLRLDANRAWTPLKAQQFAKYVNPDYRARIAFLEEPCKTRDDSRAFARETGIAIAWDESLREDDFVFAAEAGVSAVVIKPTLTGSLEKVREQVQAAHTLGLTAVISSSIESSLGLTQLARIAAWLTPQTIPGLDTLSLMQTQQVRRWPGSALPCVSDDALERLL</sequence>
<feature type="chain" id="PRO_1000013797" description="o-succinylbenzoate synthase">
    <location>
        <begin position="1"/>
        <end position="320"/>
    </location>
</feature>
<feature type="active site" description="Proton donor" evidence="1">
    <location>
        <position position="133"/>
    </location>
</feature>
<feature type="active site" description="Proton acceptor" evidence="1">
    <location>
        <position position="235"/>
    </location>
</feature>
<feature type="binding site" evidence="1">
    <location>
        <position position="161"/>
    </location>
    <ligand>
        <name>Mg(2+)</name>
        <dbReference type="ChEBI" id="CHEBI:18420"/>
    </ligand>
</feature>
<feature type="binding site" evidence="1">
    <location>
        <position position="190"/>
    </location>
    <ligand>
        <name>Mg(2+)</name>
        <dbReference type="ChEBI" id="CHEBI:18420"/>
    </ligand>
</feature>
<feature type="binding site" evidence="1">
    <location>
        <position position="213"/>
    </location>
    <ligand>
        <name>Mg(2+)</name>
        <dbReference type="ChEBI" id="CHEBI:18420"/>
    </ligand>
</feature>
<keyword id="KW-0456">Lyase</keyword>
<keyword id="KW-0460">Magnesium</keyword>
<keyword id="KW-0474">Menaquinone biosynthesis</keyword>
<keyword id="KW-0479">Metal-binding</keyword>
<keyword id="KW-1185">Reference proteome</keyword>
<evidence type="ECO:0000255" key="1">
    <source>
        <dbReference type="HAMAP-Rule" id="MF_00470"/>
    </source>
</evidence>
<accession>A8ADX2</accession>
<name>MENC_CITK8</name>
<proteinExistence type="inferred from homology"/>
<comment type="function">
    <text evidence="1">Converts 2-succinyl-6-hydroxy-2,4-cyclohexadiene-1-carboxylate (SHCHC) to 2-succinylbenzoate (OSB).</text>
</comment>
<comment type="catalytic activity">
    <reaction evidence="1">
        <text>(1R,6R)-6-hydroxy-2-succinyl-cyclohexa-2,4-diene-1-carboxylate = 2-succinylbenzoate + H2O</text>
        <dbReference type="Rhea" id="RHEA:10196"/>
        <dbReference type="ChEBI" id="CHEBI:15377"/>
        <dbReference type="ChEBI" id="CHEBI:18325"/>
        <dbReference type="ChEBI" id="CHEBI:58689"/>
        <dbReference type="EC" id="4.2.1.113"/>
    </reaction>
</comment>
<comment type="cofactor">
    <cofactor evidence="1">
        <name>a divalent metal cation</name>
        <dbReference type="ChEBI" id="CHEBI:60240"/>
    </cofactor>
</comment>
<comment type="pathway">
    <text evidence="1">Quinol/quinone metabolism; 1,4-dihydroxy-2-naphthoate biosynthesis; 1,4-dihydroxy-2-naphthoate from chorismate: step 4/7.</text>
</comment>
<comment type="pathway">
    <text evidence="1">Quinol/quinone metabolism; menaquinone biosynthesis.</text>
</comment>
<comment type="similarity">
    <text evidence="1">Belongs to the mandelate racemase/muconate lactonizing enzyme family. MenC type 1 subfamily.</text>
</comment>
<gene>
    <name evidence="1" type="primary">menC</name>
    <name type="ordered locus">CKO_00529</name>
</gene>
<organism>
    <name type="scientific">Citrobacter koseri (strain ATCC BAA-895 / CDC 4225-83 / SGSC4696)</name>
    <dbReference type="NCBI Taxonomy" id="290338"/>
    <lineage>
        <taxon>Bacteria</taxon>
        <taxon>Pseudomonadati</taxon>
        <taxon>Pseudomonadota</taxon>
        <taxon>Gammaproteobacteria</taxon>
        <taxon>Enterobacterales</taxon>
        <taxon>Enterobacteriaceae</taxon>
        <taxon>Citrobacter</taxon>
    </lineage>
</organism>
<protein>
    <recommendedName>
        <fullName evidence="1">o-succinylbenzoate synthase</fullName>
        <shortName evidence="1">OSB synthase</shortName>
        <shortName evidence="1">OSBS</shortName>
        <ecNumber evidence="1">4.2.1.113</ecNumber>
    </recommendedName>
    <alternativeName>
        <fullName evidence="1">4-(2'-carboxyphenyl)-4-oxybutyric acid synthase</fullName>
    </alternativeName>
    <alternativeName>
        <fullName evidence="1">o-succinylbenzoic acid synthase</fullName>
    </alternativeName>
</protein>